<protein>
    <recommendedName>
        <fullName evidence="1">Methionyl-tRNA formyltransferase</fullName>
        <ecNumber evidence="1">2.1.2.9</ecNumber>
    </recommendedName>
</protein>
<accession>B2A2K2</accession>
<comment type="function">
    <text evidence="1">Attaches a formyl group to the free amino group of methionyl-tRNA(fMet). The formyl group appears to play a dual role in the initiator identity of N-formylmethionyl-tRNA by promoting its recognition by IF2 and preventing the misappropriation of this tRNA by the elongation apparatus.</text>
</comment>
<comment type="catalytic activity">
    <reaction evidence="1">
        <text>L-methionyl-tRNA(fMet) + (6R)-10-formyltetrahydrofolate = N-formyl-L-methionyl-tRNA(fMet) + (6S)-5,6,7,8-tetrahydrofolate + H(+)</text>
        <dbReference type="Rhea" id="RHEA:24380"/>
        <dbReference type="Rhea" id="RHEA-COMP:9952"/>
        <dbReference type="Rhea" id="RHEA-COMP:9953"/>
        <dbReference type="ChEBI" id="CHEBI:15378"/>
        <dbReference type="ChEBI" id="CHEBI:57453"/>
        <dbReference type="ChEBI" id="CHEBI:78530"/>
        <dbReference type="ChEBI" id="CHEBI:78844"/>
        <dbReference type="ChEBI" id="CHEBI:195366"/>
        <dbReference type="EC" id="2.1.2.9"/>
    </reaction>
</comment>
<comment type="similarity">
    <text evidence="1">Belongs to the Fmt family.</text>
</comment>
<feature type="chain" id="PRO_1000098421" description="Methionyl-tRNA formyltransferase">
    <location>
        <begin position="1"/>
        <end position="313"/>
    </location>
</feature>
<feature type="region of interest" description="Disordered" evidence="2">
    <location>
        <begin position="32"/>
        <end position="51"/>
    </location>
</feature>
<feature type="binding site" evidence="1">
    <location>
        <begin position="109"/>
        <end position="112"/>
    </location>
    <ligand>
        <name>(6S)-5,6,7,8-tetrahydrofolate</name>
        <dbReference type="ChEBI" id="CHEBI:57453"/>
    </ligand>
</feature>
<gene>
    <name evidence="1" type="primary">fmt</name>
    <name type="ordered locus">Nther_1334</name>
</gene>
<dbReference type="EC" id="2.1.2.9" evidence="1"/>
<dbReference type="EMBL" id="CP001034">
    <property type="protein sequence ID" value="ACB84917.1"/>
    <property type="molecule type" value="Genomic_DNA"/>
</dbReference>
<dbReference type="RefSeq" id="WP_012447792.1">
    <property type="nucleotide sequence ID" value="NC_010718.1"/>
</dbReference>
<dbReference type="SMR" id="B2A2K2"/>
<dbReference type="FunCoup" id="B2A2K2">
    <property type="interactions" value="406"/>
</dbReference>
<dbReference type="STRING" id="457570.Nther_1334"/>
<dbReference type="KEGG" id="nth:Nther_1334"/>
<dbReference type="eggNOG" id="COG0223">
    <property type="taxonomic scope" value="Bacteria"/>
</dbReference>
<dbReference type="HOGENOM" id="CLU_033347_1_1_9"/>
<dbReference type="InParanoid" id="B2A2K2"/>
<dbReference type="OrthoDB" id="9802815at2"/>
<dbReference type="Proteomes" id="UP000001683">
    <property type="component" value="Chromosome"/>
</dbReference>
<dbReference type="GO" id="GO:0005829">
    <property type="term" value="C:cytosol"/>
    <property type="evidence" value="ECO:0007669"/>
    <property type="project" value="TreeGrafter"/>
</dbReference>
<dbReference type="GO" id="GO:0004479">
    <property type="term" value="F:methionyl-tRNA formyltransferase activity"/>
    <property type="evidence" value="ECO:0007669"/>
    <property type="project" value="UniProtKB-UniRule"/>
</dbReference>
<dbReference type="CDD" id="cd08646">
    <property type="entry name" value="FMT_core_Met-tRNA-FMT_N"/>
    <property type="match status" value="1"/>
</dbReference>
<dbReference type="CDD" id="cd08704">
    <property type="entry name" value="Met_tRNA_FMT_C"/>
    <property type="match status" value="1"/>
</dbReference>
<dbReference type="FunFam" id="3.40.50.12230:FF:000001">
    <property type="entry name" value="Methionyl-tRNA formyltransferase"/>
    <property type="match status" value="1"/>
</dbReference>
<dbReference type="Gene3D" id="3.40.50.12230">
    <property type="match status" value="1"/>
</dbReference>
<dbReference type="HAMAP" id="MF_00182">
    <property type="entry name" value="Formyl_trans"/>
    <property type="match status" value="1"/>
</dbReference>
<dbReference type="InterPro" id="IPR005794">
    <property type="entry name" value="Fmt"/>
</dbReference>
<dbReference type="InterPro" id="IPR005793">
    <property type="entry name" value="Formyl_trans_C"/>
</dbReference>
<dbReference type="InterPro" id="IPR002376">
    <property type="entry name" value="Formyl_transf_N"/>
</dbReference>
<dbReference type="InterPro" id="IPR036477">
    <property type="entry name" value="Formyl_transf_N_sf"/>
</dbReference>
<dbReference type="InterPro" id="IPR011034">
    <property type="entry name" value="Formyl_transferase-like_C_sf"/>
</dbReference>
<dbReference type="InterPro" id="IPR001555">
    <property type="entry name" value="GART_AS"/>
</dbReference>
<dbReference type="InterPro" id="IPR044135">
    <property type="entry name" value="Met-tRNA-FMT_C"/>
</dbReference>
<dbReference type="InterPro" id="IPR041711">
    <property type="entry name" value="Met-tRNA-FMT_N"/>
</dbReference>
<dbReference type="NCBIfam" id="TIGR00460">
    <property type="entry name" value="fmt"/>
    <property type="match status" value="1"/>
</dbReference>
<dbReference type="PANTHER" id="PTHR11138">
    <property type="entry name" value="METHIONYL-TRNA FORMYLTRANSFERASE"/>
    <property type="match status" value="1"/>
</dbReference>
<dbReference type="PANTHER" id="PTHR11138:SF5">
    <property type="entry name" value="METHIONYL-TRNA FORMYLTRANSFERASE, MITOCHONDRIAL"/>
    <property type="match status" value="1"/>
</dbReference>
<dbReference type="Pfam" id="PF02911">
    <property type="entry name" value="Formyl_trans_C"/>
    <property type="match status" value="1"/>
</dbReference>
<dbReference type="Pfam" id="PF00551">
    <property type="entry name" value="Formyl_trans_N"/>
    <property type="match status" value="1"/>
</dbReference>
<dbReference type="SUPFAM" id="SSF50486">
    <property type="entry name" value="FMT C-terminal domain-like"/>
    <property type="match status" value="1"/>
</dbReference>
<dbReference type="SUPFAM" id="SSF53328">
    <property type="entry name" value="Formyltransferase"/>
    <property type="match status" value="1"/>
</dbReference>
<dbReference type="PROSITE" id="PS00373">
    <property type="entry name" value="GART"/>
    <property type="match status" value="1"/>
</dbReference>
<reference key="1">
    <citation type="submission" date="2008-04" db="EMBL/GenBank/DDBJ databases">
        <title>Complete sequence of chromosome of Natranaerobius thermophilus JW/NM-WN-LF.</title>
        <authorList>
            <consortium name="US DOE Joint Genome Institute"/>
            <person name="Copeland A."/>
            <person name="Lucas S."/>
            <person name="Lapidus A."/>
            <person name="Glavina del Rio T."/>
            <person name="Dalin E."/>
            <person name="Tice H."/>
            <person name="Bruce D."/>
            <person name="Goodwin L."/>
            <person name="Pitluck S."/>
            <person name="Chertkov O."/>
            <person name="Brettin T."/>
            <person name="Detter J.C."/>
            <person name="Han C."/>
            <person name="Kuske C.R."/>
            <person name="Schmutz J."/>
            <person name="Larimer F."/>
            <person name="Land M."/>
            <person name="Hauser L."/>
            <person name="Kyrpides N."/>
            <person name="Lykidis A."/>
            <person name="Mesbah N.M."/>
            <person name="Wiegel J."/>
        </authorList>
    </citation>
    <scope>NUCLEOTIDE SEQUENCE [LARGE SCALE GENOMIC DNA]</scope>
    <source>
        <strain>ATCC BAA-1301 / DSM 18059 / JW/NM-WN-LF</strain>
    </source>
</reference>
<name>FMT_NATTJ</name>
<proteinExistence type="inferred from homology"/>
<organism>
    <name type="scientific">Natranaerobius thermophilus (strain ATCC BAA-1301 / DSM 18059 / JW/NM-WN-LF)</name>
    <dbReference type="NCBI Taxonomy" id="457570"/>
    <lineage>
        <taxon>Bacteria</taxon>
        <taxon>Bacillati</taxon>
        <taxon>Bacillota</taxon>
        <taxon>Clostridia</taxon>
        <taxon>Natranaerobiales</taxon>
        <taxon>Natranaerobiaceae</taxon>
        <taxon>Natranaerobius</taxon>
    </lineage>
</organism>
<sequence>MRTIFMGTPDFSVPFIEAIARSTHNLNLVVTQPDRRKGRGKELQPPPAKRKAEELGIDVFQPESIHNNYAYQILSDIEPHLIVTAAYGQILPRKILDLPRIKAINVHASLLPEYRGAAPIHRAVMDGKEQTGVTIMEMCDKMDAGDILNYESVDIGKTDTTGDVYKQIITVGPQLLIETMDLLEKNQVTPLKQDENQVSYAPKLKKEDEYLDFSKYTNTEVFNRVRGLNPWPGAFTKFEGKRLKIWETKVHNSSSFNSNSKPGEIIEINQQGPVVKCCQGSVILTKIQPSGKKAMTGEQFIRGYDIKSGIQLE</sequence>
<evidence type="ECO:0000255" key="1">
    <source>
        <dbReference type="HAMAP-Rule" id="MF_00182"/>
    </source>
</evidence>
<evidence type="ECO:0000256" key="2">
    <source>
        <dbReference type="SAM" id="MobiDB-lite"/>
    </source>
</evidence>
<keyword id="KW-0648">Protein biosynthesis</keyword>
<keyword id="KW-1185">Reference proteome</keyword>
<keyword id="KW-0808">Transferase</keyword>